<feature type="chain" id="PRO_1000124930" description="GTP cyclohydrolase 1">
    <location>
        <begin position="1"/>
        <end position="184"/>
    </location>
</feature>
<feature type="binding site" evidence="1">
    <location>
        <position position="75"/>
    </location>
    <ligand>
        <name>Zn(2+)</name>
        <dbReference type="ChEBI" id="CHEBI:29105"/>
    </ligand>
</feature>
<feature type="binding site" evidence="1">
    <location>
        <position position="78"/>
    </location>
    <ligand>
        <name>Zn(2+)</name>
        <dbReference type="ChEBI" id="CHEBI:29105"/>
    </ligand>
</feature>
<feature type="binding site" evidence="1">
    <location>
        <position position="146"/>
    </location>
    <ligand>
        <name>Zn(2+)</name>
        <dbReference type="ChEBI" id="CHEBI:29105"/>
    </ligand>
</feature>
<comment type="catalytic activity">
    <reaction evidence="1">
        <text>GTP + H2O = 7,8-dihydroneopterin 3'-triphosphate + formate + H(+)</text>
        <dbReference type="Rhea" id="RHEA:17473"/>
        <dbReference type="ChEBI" id="CHEBI:15377"/>
        <dbReference type="ChEBI" id="CHEBI:15378"/>
        <dbReference type="ChEBI" id="CHEBI:15740"/>
        <dbReference type="ChEBI" id="CHEBI:37565"/>
        <dbReference type="ChEBI" id="CHEBI:58462"/>
        <dbReference type="EC" id="3.5.4.16"/>
    </reaction>
</comment>
<comment type="pathway">
    <text evidence="1">Cofactor biosynthesis; 7,8-dihydroneopterin triphosphate biosynthesis; 7,8-dihydroneopterin triphosphate from GTP: step 1/1.</text>
</comment>
<comment type="subunit">
    <text evidence="1">Homomer.</text>
</comment>
<comment type="similarity">
    <text evidence="1">Belongs to the GTP cyclohydrolase I family.</text>
</comment>
<evidence type="ECO:0000255" key="1">
    <source>
        <dbReference type="HAMAP-Rule" id="MF_00223"/>
    </source>
</evidence>
<protein>
    <recommendedName>
        <fullName evidence="1">GTP cyclohydrolase 1</fullName>
        <ecNumber evidence="1">3.5.4.16</ecNumber>
    </recommendedName>
    <alternativeName>
        <fullName evidence="1">GTP cyclohydrolase I</fullName>
        <shortName evidence="1">GTP-CH-I</shortName>
    </alternativeName>
</protein>
<dbReference type="EC" id="3.5.4.16" evidence="1"/>
<dbReference type="EMBL" id="CP000919">
    <property type="protein sequence ID" value="ACO18651.1"/>
    <property type="molecule type" value="Genomic_DNA"/>
</dbReference>
<dbReference type="RefSeq" id="WP_000380924.1">
    <property type="nucleotide sequence ID" value="NC_012466.1"/>
</dbReference>
<dbReference type="SMR" id="C1CC81"/>
<dbReference type="GeneID" id="45652233"/>
<dbReference type="KEGG" id="sjj:SPJ_0300"/>
<dbReference type="HOGENOM" id="CLU_049768_3_3_9"/>
<dbReference type="UniPathway" id="UPA00848">
    <property type="reaction ID" value="UER00151"/>
</dbReference>
<dbReference type="Proteomes" id="UP000002206">
    <property type="component" value="Chromosome"/>
</dbReference>
<dbReference type="GO" id="GO:0005737">
    <property type="term" value="C:cytoplasm"/>
    <property type="evidence" value="ECO:0007669"/>
    <property type="project" value="TreeGrafter"/>
</dbReference>
<dbReference type="GO" id="GO:0005525">
    <property type="term" value="F:GTP binding"/>
    <property type="evidence" value="ECO:0007669"/>
    <property type="project" value="UniProtKB-KW"/>
</dbReference>
<dbReference type="GO" id="GO:0003934">
    <property type="term" value="F:GTP cyclohydrolase I activity"/>
    <property type="evidence" value="ECO:0007669"/>
    <property type="project" value="UniProtKB-UniRule"/>
</dbReference>
<dbReference type="GO" id="GO:0008270">
    <property type="term" value="F:zinc ion binding"/>
    <property type="evidence" value="ECO:0007669"/>
    <property type="project" value="UniProtKB-UniRule"/>
</dbReference>
<dbReference type="GO" id="GO:0006730">
    <property type="term" value="P:one-carbon metabolic process"/>
    <property type="evidence" value="ECO:0007669"/>
    <property type="project" value="UniProtKB-UniRule"/>
</dbReference>
<dbReference type="GO" id="GO:0006729">
    <property type="term" value="P:tetrahydrobiopterin biosynthetic process"/>
    <property type="evidence" value="ECO:0007669"/>
    <property type="project" value="TreeGrafter"/>
</dbReference>
<dbReference type="GO" id="GO:0046654">
    <property type="term" value="P:tetrahydrofolate biosynthetic process"/>
    <property type="evidence" value="ECO:0007669"/>
    <property type="project" value="UniProtKB-UniRule"/>
</dbReference>
<dbReference type="CDD" id="cd00642">
    <property type="entry name" value="GTP_cyclohydro1"/>
    <property type="match status" value="1"/>
</dbReference>
<dbReference type="FunFam" id="1.10.286.10:FF:000001">
    <property type="entry name" value="GTP cyclohydrolase 1"/>
    <property type="match status" value="1"/>
</dbReference>
<dbReference type="FunFam" id="3.30.1130.10:FF:000001">
    <property type="entry name" value="GTP cyclohydrolase 1"/>
    <property type="match status" value="1"/>
</dbReference>
<dbReference type="Gene3D" id="1.10.286.10">
    <property type="match status" value="1"/>
</dbReference>
<dbReference type="Gene3D" id="3.30.1130.10">
    <property type="match status" value="1"/>
</dbReference>
<dbReference type="HAMAP" id="MF_00223">
    <property type="entry name" value="FolE"/>
    <property type="match status" value="1"/>
</dbReference>
<dbReference type="InterPro" id="IPR043133">
    <property type="entry name" value="GTP-CH-I_C/QueF"/>
</dbReference>
<dbReference type="InterPro" id="IPR043134">
    <property type="entry name" value="GTP-CH-I_N"/>
</dbReference>
<dbReference type="InterPro" id="IPR001474">
    <property type="entry name" value="GTP_CycHdrlase_I"/>
</dbReference>
<dbReference type="InterPro" id="IPR018234">
    <property type="entry name" value="GTP_CycHdrlase_I_CS"/>
</dbReference>
<dbReference type="InterPro" id="IPR020602">
    <property type="entry name" value="GTP_CycHdrlase_I_dom"/>
</dbReference>
<dbReference type="NCBIfam" id="TIGR00063">
    <property type="entry name" value="folE"/>
    <property type="match status" value="1"/>
</dbReference>
<dbReference type="NCBIfam" id="NF006825">
    <property type="entry name" value="PRK09347.1-2"/>
    <property type="match status" value="1"/>
</dbReference>
<dbReference type="NCBIfam" id="NF006826">
    <property type="entry name" value="PRK09347.1-3"/>
    <property type="match status" value="1"/>
</dbReference>
<dbReference type="PANTHER" id="PTHR11109:SF7">
    <property type="entry name" value="GTP CYCLOHYDROLASE 1"/>
    <property type="match status" value="1"/>
</dbReference>
<dbReference type="PANTHER" id="PTHR11109">
    <property type="entry name" value="GTP CYCLOHYDROLASE I"/>
    <property type="match status" value="1"/>
</dbReference>
<dbReference type="Pfam" id="PF01227">
    <property type="entry name" value="GTP_cyclohydroI"/>
    <property type="match status" value="1"/>
</dbReference>
<dbReference type="SUPFAM" id="SSF55620">
    <property type="entry name" value="Tetrahydrobiopterin biosynthesis enzymes-like"/>
    <property type="match status" value="1"/>
</dbReference>
<dbReference type="PROSITE" id="PS00859">
    <property type="entry name" value="GTP_CYCLOHYDROL_1_1"/>
    <property type="match status" value="1"/>
</dbReference>
<dbReference type="PROSITE" id="PS00860">
    <property type="entry name" value="GTP_CYCLOHYDROL_1_2"/>
    <property type="match status" value="1"/>
</dbReference>
<keyword id="KW-0342">GTP-binding</keyword>
<keyword id="KW-0378">Hydrolase</keyword>
<keyword id="KW-0479">Metal-binding</keyword>
<keyword id="KW-0547">Nucleotide-binding</keyword>
<keyword id="KW-0554">One-carbon metabolism</keyword>
<keyword id="KW-0862">Zinc</keyword>
<accession>C1CC81</accession>
<name>GCH1_STRZJ</name>
<proteinExistence type="inferred from homology"/>
<gene>
    <name evidence="1" type="primary">folE</name>
    <name type="ordered locus">SPJ_0300</name>
</gene>
<organism>
    <name type="scientific">Streptococcus pneumoniae (strain JJA)</name>
    <dbReference type="NCBI Taxonomy" id="488222"/>
    <lineage>
        <taxon>Bacteria</taxon>
        <taxon>Bacillati</taxon>
        <taxon>Bacillota</taxon>
        <taxon>Bacilli</taxon>
        <taxon>Lactobacillales</taxon>
        <taxon>Streptococcaceae</taxon>
        <taxon>Streptococcus</taxon>
    </lineage>
</organism>
<sequence>MDTQKIEAAVKMIIEAVGENANREGLQETPARVARMYQEIFSGLGQTAEEHLSKSFEIIDDNMVVEKDIFFHTMCEHHFLPFYGRAHIAYIPDGRVAGLSKLARTVEVYSKKPQIQERLNIEVADALMDYLGAKGAFVVIEAEHMCMSMRGVRKPGTATLTTVARGLFETDKDLRDQAYRLMGL</sequence>
<reference key="1">
    <citation type="journal article" date="2010" name="Genome Biol.">
        <title>Structure and dynamics of the pan-genome of Streptococcus pneumoniae and closely related species.</title>
        <authorList>
            <person name="Donati C."/>
            <person name="Hiller N.L."/>
            <person name="Tettelin H."/>
            <person name="Muzzi A."/>
            <person name="Croucher N.J."/>
            <person name="Angiuoli S.V."/>
            <person name="Oggioni M."/>
            <person name="Dunning Hotopp J.C."/>
            <person name="Hu F.Z."/>
            <person name="Riley D.R."/>
            <person name="Covacci A."/>
            <person name="Mitchell T.J."/>
            <person name="Bentley S.D."/>
            <person name="Kilian M."/>
            <person name="Ehrlich G.D."/>
            <person name="Rappuoli R."/>
            <person name="Moxon E.R."/>
            <person name="Masignani V."/>
        </authorList>
    </citation>
    <scope>NUCLEOTIDE SEQUENCE [LARGE SCALE GENOMIC DNA]</scope>
    <source>
        <strain>JJA</strain>
    </source>
</reference>